<evidence type="ECO:0000250" key="1"/>
<evidence type="ECO:0000255" key="2">
    <source>
        <dbReference type="HAMAP-Rule" id="MF_00047"/>
    </source>
</evidence>
<protein>
    <recommendedName>
        <fullName evidence="2">D-alanine--D-alanine ligase</fullName>
        <ecNumber evidence="2">6.3.2.4</ecNumber>
    </recommendedName>
    <alternativeName>
        <fullName evidence="2">D-Ala-D-Ala ligase</fullName>
    </alternativeName>
    <alternativeName>
        <fullName evidence="2">D-alanylalanine synthetase</fullName>
    </alternativeName>
</protein>
<proteinExistence type="inferred from homology"/>
<accession>A5CW55</accession>
<organism>
    <name type="scientific">Vesicomyosocius okutanii subsp. Calyptogena okutanii (strain HA)</name>
    <dbReference type="NCBI Taxonomy" id="412965"/>
    <lineage>
        <taxon>Bacteria</taxon>
        <taxon>Pseudomonadati</taxon>
        <taxon>Pseudomonadota</taxon>
        <taxon>Gammaproteobacteria</taxon>
        <taxon>Candidatus Pseudothioglobaceae</taxon>
        <taxon>Candidatus Vesicomyosocius</taxon>
    </lineage>
</organism>
<keyword id="KW-0067">ATP-binding</keyword>
<keyword id="KW-0133">Cell shape</keyword>
<keyword id="KW-0961">Cell wall biogenesis/degradation</keyword>
<keyword id="KW-0963">Cytoplasm</keyword>
<keyword id="KW-0436">Ligase</keyword>
<keyword id="KW-0460">Magnesium</keyword>
<keyword id="KW-0464">Manganese</keyword>
<keyword id="KW-0479">Metal-binding</keyword>
<keyword id="KW-0547">Nucleotide-binding</keyword>
<keyword id="KW-0573">Peptidoglycan synthesis</keyword>
<keyword id="KW-1185">Reference proteome</keyword>
<dbReference type="EC" id="6.3.2.4" evidence="2"/>
<dbReference type="EMBL" id="AP009247">
    <property type="protein sequence ID" value="BAF61813.1"/>
    <property type="molecule type" value="Genomic_DNA"/>
</dbReference>
<dbReference type="RefSeq" id="WP_011930083.1">
    <property type="nucleotide sequence ID" value="NC_009465.1"/>
</dbReference>
<dbReference type="SMR" id="A5CW55"/>
<dbReference type="STRING" id="412965.COSY_0701"/>
<dbReference type="KEGG" id="vok:COSY_0701"/>
<dbReference type="eggNOG" id="COG1181">
    <property type="taxonomic scope" value="Bacteria"/>
</dbReference>
<dbReference type="HOGENOM" id="CLU_039268_1_2_6"/>
<dbReference type="OrthoDB" id="9813261at2"/>
<dbReference type="UniPathway" id="UPA00219"/>
<dbReference type="Proteomes" id="UP000000247">
    <property type="component" value="Chromosome"/>
</dbReference>
<dbReference type="GO" id="GO:0005829">
    <property type="term" value="C:cytosol"/>
    <property type="evidence" value="ECO:0007669"/>
    <property type="project" value="TreeGrafter"/>
</dbReference>
<dbReference type="GO" id="GO:0005524">
    <property type="term" value="F:ATP binding"/>
    <property type="evidence" value="ECO:0007669"/>
    <property type="project" value="UniProtKB-KW"/>
</dbReference>
<dbReference type="GO" id="GO:0008716">
    <property type="term" value="F:D-alanine-D-alanine ligase activity"/>
    <property type="evidence" value="ECO:0007669"/>
    <property type="project" value="UniProtKB-UniRule"/>
</dbReference>
<dbReference type="GO" id="GO:0046872">
    <property type="term" value="F:metal ion binding"/>
    <property type="evidence" value="ECO:0007669"/>
    <property type="project" value="UniProtKB-KW"/>
</dbReference>
<dbReference type="GO" id="GO:0071555">
    <property type="term" value="P:cell wall organization"/>
    <property type="evidence" value="ECO:0007669"/>
    <property type="project" value="UniProtKB-KW"/>
</dbReference>
<dbReference type="GO" id="GO:0009252">
    <property type="term" value="P:peptidoglycan biosynthetic process"/>
    <property type="evidence" value="ECO:0007669"/>
    <property type="project" value="UniProtKB-UniRule"/>
</dbReference>
<dbReference type="GO" id="GO:0008360">
    <property type="term" value="P:regulation of cell shape"/>
    <property type="evidence" value="ECO:0007669"/>
    <property type="project" value="UniProtKB-KW"/>
</dbReference>
<dbReference type="FunFam" id="3.30.470.20:FF:000008">
    <property type="entry name" value="D-alanine--D-alanine ligase"/>
    <property type="match status" value="1"/>
</dbReference>
<dbReference type="Gene3D" id="3.40.50.20">
    <property type="match status" value="1"/>
</dbReference>
<dbReference type="Gene3D" id="3.30.1490.20">
    <property type="entry name" value="ATP-grasp fold, A domain"/>
    <property type="match status" value="1"/>
</dbReference>
<dbReference type="Gene3D" id="3.30.470.20">
    <property type="entry name" value="ATP-grasp fold, B domain"/>
    <property type="match status" value="1"/>
</dbReference>
<dbReference type="HAMAP" id="MF_00047">
    <property type="entry name" value="Dala_Dala_lig"/>
    <property type="match status" value="1"/>
</dbReference>
<dbReference type="InterPro" id="IPR011761">
    <property type="entry name" value="ATP-grasp"/>
</dbReference>
<dbReference type="InterPro" id="IPR013815">
    <property type="entry name" value="ATP_grasp_subdomain_1"/>
</dbReference>
<dbReference type="InterPro" id="IPR000291">
    <property type="entry name" value="D-Ala_lig_Van_CS"/>
</dbReference>
<dbReference type="InterPro" id="IPR005905">
    <property type="entry name" value="D_ala_D_ala"/>
</dbReference>
<dbReference type="InterPro" id="IPR011095">
    <property type="entry name" value="Dala_Dala_lig_C"/>
</dbReference>
<dbReference type="InterPro" id="IPR016185">
    <property type="entry name" value="PreATP-grasp_dom_sf"/>
</dbReference>
<dbReference type="NCBIfam" id="TIGR01205">
    <property type="entry name" value="D_ala_D_alaTIGR"/>
    <property type="match status" value="1"/>
</dbReference>
<dbReference type="NCBIfam" id="NF002378">
    <property type="entry name" value="PRK01372.1"/>
    <property type="match status" value="1"/>
</dbReference>
<dbReference type="PANTHER" id="PTHR23132">
    <property type="entry name" value="D-ALANINE--D-ALANINE LIGASE"/>
    <property type="match status" value="1"/>
</dbReference>
<dbReference type="PANTHER" id="PTHR23132:SF23">
    <property type="entry name" value="D-ALANINE--D-ALANINE LIGASE B"/>
    <property type="match status" value="1"/>
</dbReference>
<dbReference type="Pfam" id="PF07478">
    <property type="entry name" value="Dala_Dala_lig_C"/>
    <property type="match status" value="1"/>
</dbReference>
<dbReference type="PIRSF" id="PIRSF039102">
    <property type="entry name" value="Ddl/VanB"/>
    <property type="match status" value="1"/>
</dbReference>
<dbReference type="SUPFAM" id="SSF56059">
    <property type="entry name" value="Glutathione synthetase ATP-binding domain-like"/>
    <property type="match status" value="1"/>
</dbReference>
<dbReference type="SUPFAM" id="SSF52440">
    <property type="entry name" value="PreATP-grasp domain"/>
    <property type="match status" value="1"/>
</dbReference>
<dbReference type="PROSITE" id="PS50975">
    <property type="entry name" value="ATP_GRASP"/>
    <property type="match status" value="1"/>
</dbReference>
<dbReference type="PROSITE" id="PS00844">
    <property type="entry name" value="DALA_DALA_LIGASE_2"/>
    <property type="match status" value="1"/>
</dbReference>
<name>DDL_VESOH</name>
<gene>
    <name evidence="2" type="primary">ddl</name>
    <name type="ordered locus">COSY_0701</name>
</gene>
<sequence length="293" mass="32900">MIAILMGGNSAERAISLKSGEAIYQTLNNQNIDCFTFDWYGDNLSEFWQQEFDQVFIILHGRGGEDGYIQKQLENRGICYTGSDSNASHNSMDKARTKIIWEQHSLTLAPSIIANIDQPINPINFPLPWAVKPTLEGSSIGISKVDNQMQLNDALMLAWQYAPYALIEQWIKGDEYTVAILGDKALPVVRIITDQNFYDYESKYHSNKTQYLCPCNLSLTQEKALQAIALKAFFAINAKGWGRVDFIINQHNKPYLLEINTVPGMTSHSLVPMAAKAIGISFNKLVTSIINEI</sequence>
<comment type="function">
    <text evidence="2">Cell wall formation.</text>
</comment>
<comment type="catalytic activity">
    <reaction evidence="2">
        <text>2 D-alanine + ATP = D-alanyl-D-alanine + ADP + phosphate + H(+)</text>
        <dbReference type="Rhea" id="RHEA:11224"/>
        <dbReference type="ChEBI" id="CHEBI:15378"/>
        <dbReference type="ChEBI" id="CHEBI:30616"/>
        <dbReference type="ChEBI" id="CHEBI:43474"/>
        <dbReference type="ChEBI" id="CHEBI:57416"/>
        <dbReference type="ChEBI" id="CHEBI:57822"/>
        <dbReference type="ChEBI" id="CHEBI:456216"/>
        <dbReference type="EC" id="6.3.2.4"/>
    </reaction>
</comment>
<comment type="cofactor">
    <cofactor evidence="1">
        <name>Mg(2+)</name>
        <dbReference type="ChEBI" id="CHEBI:18420"/>
    </cofactor>
    <cofactor evidence="1">
        <name>Mn(2+)</name>
        <dbReference type="ChEBI" id="CHEBI:29035"/>
    </cofactor>
    <text evidence="1">Binds 2 magnesium or manganese ions per subunit.</text>
</comment>
<comment type="pathway">
    <text evidence="2">Cell wall biogenesis; peptidoglycan biosynthesis.</text>
</comment>
<comment type="subcellular location">
    <subcellularLocation>
        <location evidence="2">Cytoplasm</location>
    </subcellularLocation>
</comment>
<comment type="similarity">
    <text evidence="2">Belongs to the D-alanine--D-alanine ligase family.</text>
</comment>
<feature type="chain" id="PRO_0000341193" description="D-alanine--D-alanine ligase">
    <location>
        <begin position="1"/>
        <end position="293"/>
    </location>
</feature>
<feature type="domain" description="ATP-grasp" evidence="2">
    <location>
        <begin position="98"/>
        <end position="291"/>
    </location>
</feature>
<feature type="binding site" evidence="2">
    <location>
        <begin position="124"/>
        <end position="177"/>
    </location>
    <ligand>
        <name>ATP</name>
        <dbReference type="ChEBI" id="CHEBI:30616"/>
    </ligand>
</feature>
<feature type="binding site" evidence="2">
    <location>
        <position position="245"/>
    </location>
    <ligand>
        <name>Mg(2+)</name>
        <dbReference type="ChEBI" id="CHEBI:18420"/>
        <label>1</label>
    </ligand>
</feature>
<feature type="binding site" evidence="2">
    <location>
        <position position="258"/>
    </location>
    <ligand>
        <name>Mg(2+)</name>
        <dbReference type="ChEBI" id="CHEBI:18420"/>
        <label>1</label>
    </ligand>
</feature>
<feature type="binding site" evidence="2">
    <location>
        <position position="258"/>
    </location>
    <ligand>
        <name>Mg(2+)</name>
        <dbReference type="ChEBI" id="CHEBI:18420"/>
        <label>2</label>
    </ligand>
</feature>
<feature type="binding site" evidence="2">
    <location>
        <position position="260"/>
    </location>
    <ligand>
        <name>Mg(2+)</name>
        <dbReference type="ChEBI" id="CHEBI:18420"/>
        <label>2</label>
    </ligand>
</feature>
<reference key="1">
    <citation type="journal article" date="2007" name="Curr. Biol.">
        <title>Reduced genome of the thioautotrophic intracellular symbiont in a deep-sea clam, Calyptogena okutanii.</title>
        <authorList>
            <person name="Kuwahara H."/>
            <person name="Yoshida T."/>
            <person name="Takaki Y."/>
            <person name="Shimamura S."/>
            <person name="Nishi S."/>
            <person name="Harada M."/>
            <person name="Matsuyama K."/>
            <person name="Takishita K."/>
            <person name="Kawato M."/>
            <person name="Uematsu K."/>
            <person name="Fujiwara Y."/>
            <person name="Sato T."/>
            <person name="Kato C."/>
            <person name="Kitagawa M."/>
            <person name="Kato I."/>
            <person name="Maruyama T."/>
        </authorList>
    </citation>
    <scope>NUCLEOTIDE SEQUENCE [LARGE SCALE GENOMIC DNA]</scope>
    <source>
        <strain>HA</strain>
    </source>
</reference>